<protein>
    <recommendedName>
        <fullName evidence="1">Ribosomal RNA small subunit methyltransferase J</fullName>
        <ecNumber evidence="1">2.1.1.242</ecNumber>
    </recommendedName>
    <alternativeName>
        <fullName evidence="1">16S rRNA m2G1516 methyltransferase</fullName>
    </alternativeName>
    <alternativeName>
        <fullName evidence="1">rRNA (guanine-N(2)-)-methyltransferase</fullName>
    </alternativeName>
</protein>
<dbReference type="EC" id="2.1.1.242" evidence="1"/>
<dbReference type="EMBL" id="CP000308">
    <property type="protein sequence ID" value="ABG15763.1"/>
    <property type="molecule type" value="Genomic_DNA"/>
</dbReference>
<dbReference type="RefSeq" id="WP_002215483.1">
    <property type="nucleotide sequence ID" value="NZ_CP009906.1"/>
</dbReference>
<dbReference type="SMR" id="Q1C1A9"/>
<dbReference type="GeneID" id="96663312"/>
<dbReference type="KEGG" id="ypa:YPA_3801"/>
<dbReference type="Proteomes" id="UP000001971">
    <property type="component" value="Chromosome"/>
</dbReference>
<dbReference type="GO" id="GO:0005737">
    <property type="term" value="C:cytoplasm"/>
    <property type="evidence" value="ECO:0007669"/>
    <property type="project" value="UniProtKB-SubCell"/>
</dbReference>
<dbReference type="GO" id="GO:0008990">
    <property type="term" value="F:rRNA (guanine-N2-)-methyltransferase activity"/>
    <property type="evidence" value="ECO:0007669"/>
    <property type="project" value="UniProtKB-UniRule"/>
</dbReference>
<dbReference type="CDD" id="cd02440">
    <property type="entry name" value="AdoMet_MTases"/>
    <property type="match status" value="1"/>
</dbReference>
<dbReference type="Gene3D" id="3.40.50.150">
    <property type="entry name" value="Vaccinia Virus protein VP39"/>
    <property type="match status" value="1"/>
</dbReference>
<dbReference type="Gene3D" id="3.40.1630.10">
    <property type="entry name" value="YhiQ-like domain"/>
    <property type="match status" value="1"/>
</dbReference>
<dbReference type="HAMAP" id="MF_01523">
    <property type="entry name" value="16SrRNA_methyltr_J"/>
    <property type="match status" value="1"/>
</dbReference>
<dbReference type="InterPro" id="IPR007536">
    <property type="entry name" value="16SrRNA_methylTrfase_J"/>
</dbReference>
<dbReference type="InterPro" id="IPR029063">
    <property type="entry name" value="SAM-dependent_MTases_sf"/>
</dbReference>
<dbReference type="NCBIfam" id="NF008012">
    <property type="entry name" value="PRK10742.1"/>
    <property type="match status" value="1"/>
</dbReference>
<dbReference type="PANTHER" id="PTHR36112">
    <property type="entry name" value="RIBOSOMAL RNA SMALL SUBUNIT METHYLTRANSFERASE J"/>
    <property type="match status" value="1"/>
</dbReference>
<dbReference type="PANTHER" id="PTHR36112:SF1">
    <property type="entry name" value="RIBOSOMAL RNA SMALL SUBUNIT METHYLTRANSFERASE J"/>
    <property type="match status" value="1"/>
</dbReference>
<dbReference type="Pfam" id="PF04445">
    <property type="entry name" value="SAM_MT"/>
    <property type="match status" value="1"/>
</dbReference>
<dbReference type="SUPFAM" id="SSF53335">
    <property type="entry name" value="S-adenosyl-L-methionine-dependent methyltransferases"/>
    <property type="match status" value="1"/>
</dbReference>
<proteinExistence type="inferred from homology"/>
<accession>Q1C1A9</accession>
<gene>
    <name evidence="1" type="primary">rsmJ</name>
    <name type="ordered locus">YPA_3801</name>
</gene>
<comment type="function">
    <text evidence="1">Specifically methylates the guanosine in position 1516 of 16S rRNA.</text>
</comment>
<comment type="catalytic activity">
    <reaction evidence="1">
        <text>guanosine(1516) in 16S rRNA + S-adenosyl-L-methionine = N(2)-methylguanosine(1516) in 16S rRNA + S-adenosyl-L-homocysteine + H(+)</text>
        <dbReference type="Rhea" id="RHEA:43220"/>
        <dbReference type="Rhea" id="RHEA-COMP:10412"/>
        <dbReference type="Rhea" id="RHEA-COMP:10413"/>
        <dbReference type="ChEBI" id="CHEBI:15378"/>
        <dbReference type="ChEBI" id="CHEBI:57856"/>
        <dbReference type="ChEBI" id="CHEBI:59789"/>
        <dbReference type="ChEBI" id="CHEBI:74269"/>
        <dbReference type="ChEBI" id="CHEBI:74481"/>
        <dbReference type="EC" id="2.1.1.242"/>
    </reaction>
</comment>
<comment type="subcellular location">
    <subcellularLocation>
        <location evidence="1">Cytoplasm</location>
    </subcellularLocation>
</comment>
<comment type="similarity">
    <text evidence="1">Belongs to the methyltransferase superfamily. RsmJ family.</text>
</comment>
<feature type="chain" id="PRO_0000292653" description="Ribosomal RNA small subunit methyltransferase J">
    <location>
        <begin position="1"/>
        <end position="256"/>
    </location>
</feature>
<feature type="binding site" evidence="1">
    <location>
        <begin position="104"/>
        <end position="105"/>
    </location>
    <ligand>
        <name>S-adenosyl-L-methionine</name>
        <dbReference type="ChEBI" id="CHEBI:59789"/>
    </ligand>
</feature>
<feature type="binding site" evidence="1">
    <location>
        <begin position="120"/>
        <end position="121"/>
    </location>
    <ligand>
        <name>S-adenosyl-L-methionine</name>
        <dbReference type="ChEBI" id="CHEBI:59789"/>
    </ligand>
</feature>
<feature type="binding site" evidence="1">
    <location>
        <begin position="156"/>
        <end position="157"/>
    </location>
    <ligand>
        <name>S-adenosyl-L-methionine</name>
        <dbReference type="ChEBI" id="CHEBI:59789"/>
    </ligand>
</feature>
<feature type="binding site" evidence="1">
    <location>
        <position position="174"/>
    </location>
    <ligand>
        <name>S-adenosyl-L-methionine</name>
        <dbReference type="ChEBI" id="CHEBI:59789"/>
    </ligand>
</feature>
<sequence length="256" mass="27595">MSHVSICLLSEAGADPGALSILADRWGLVSDDQAVMALVLTAERLELRKRDEPKLGGIYVDFVSGTQAHRRKFGGGRGEAVAKAVGIKKGYLPRVVDATAGLGRDAFVLAALGCQVQMLERNPVVAALLDDGLRRGYLDAEIGPWLRERLTLLHASSLTALVAIEPRPEVVYLDPMYPHRQKSALVKKEMRVFQSLVGADNDADGLLAPARALATKRVVVKRPDYAEPLAGVAAQAAVVTKSHRFDIYPSSVTPPR</sequence>
<keyword id="KW-0963">Cytoplasm</keyword>
<keyword id="KW-0489">Methyltransferase</keyword>
<keyword id="KW-0698">rRNA processing</keyword>
<keyword id="KW-0949">S-adenosyl-L-methionine</keyword>
<keyword id="KW-0808">Transferase</keyword>
<reference key="1">
    <citation type="journal article" date="2006" name="J. Bacteriol.">
        <title>Complete genome sequence of Yersinia pestis strains Antiqua and Nepal516: evidence of gene reduction in an emerging pathogen.</title>
        <authorList>
            <person name="Chain P.S.G."/>
            <person name="Hu P."/>
            <person name="Malfatti S.A."/>
            <person name="Radnedge L."/>
            <person name="Larimer F."/>
            <person name="Vergez L.M."/>
            <person name="Worsham P."/>
            <person name="Chu M.C."/>
            <person name="Andersen G.L."/>
        </authorList>
    </citation>
    <scope>NUCLEOTIDE SEQUENCE [LARGE SCALE GENOMIC DNA]</scope>
    <source>
        <strain>Antiqua</strain>
    </source>
</reference>
<organism>
    <name type="scientific">Yersinia pestis bv. Antiqua (strain Antiqua)</name>
    <dbReference type="NCBI Taxonomy" id="360102"/>
    <lineage>
        <taxon>Bacteria</taxon>
        <taxon>Pseudomonadati</taxon>
        <taxon>Pseudomonadota</taxon>
        <taxon>Gammaproteobacteria</taxon>
        <taxon>Enterobacterales</taxon>
        <taxon>Yersiniaceae</taxon>
        <taxon>Yersinia</taxon>
    </lineage>
</organism>
<evidence type="ECO:0000255" key="1">
    <source>
        <dbReference type="HAMAP-Rule" id="MF_01523"/>
    </source>
</evidence>
<name>RSMJ_YERPA</name>